<accession>Q0V6Q3</accession>
<dbReference type="EC" id="1.-.-.-" evidence="6"/>
<dbReference type="EMBL" id="CH445325">
    <property type="protein sequence ID" value="EAT91806.2"/>
    <property type="molecule type" value="Genomic_DNA"/>
</dbReference>
<dbReference type="RefSeq" id="XP_001791001.1">
    <property type="nucleotide sequence ID" value="XM_001790949.1"/>
</dbReference>
<dbReference type="SMR" id="Q0V6Q3"/>
<dbReference type="GeneID" id="5967965"/>
<dbReference type="KEGG" id="pno:SNOG_00311"/>
<dbReference type="VEuPathDB" id="FungiDB:JI435_003110"/>
<dbReference type="InParanoid" id="Q0V6Q3"/>
<dbReference type="Proteomes" id="UP000001055">
    <property type="component" value="Unassembled WGS sequence"/>
</dbReference>
<dbReference type="GO" id="GO:0000166">
    <property type="term" value="F:nucleotide binding"/>
    <property type="evidence" value="ECO:0007669"/>
    <property type="project" value="UniProtKB-KW"/>
</dbReference>
<dbReference type="GO" id="GO:0016651">
    <property type="term" value="F:oxidoreductase activity, acting on NAD(P)H"/>
    <property type="evidence" value="ECO:0007669"/>
    <property type="project" value="InterPro"/>
</dbReference>
<dbReference type="CDD" id="cd08249">
    <property type="entry name" value="enoyl_reductase_like"/>
    <property type="match status" value="1"/>
</dbReference>
<dbReference type="Gene3D" id="3.90.180.10">
    <property type="entry name" value="Medium-chain alcohol dehydrogenases, catalytic domain"/>
    <property type="match status" value="1"/>
</dbReference>
<dbReference type="Gene3D" id="3.40.50.720">
    <property type="entry name" value="NAD(P)-binding Rossmann-like Domain"/>
    <property type="match status" value="1"/>
</dbReference>
<dbReference type="InterPro" id="IPR013154">
    <property type="entry name" value="ADH-like_N"/>
</dbReference>
<dbReference type="InterPro" id="IPR011032">
    <property type="entry name" value="GroES-like_sf"/>
</dbReference>
<dbReference type="InterPro" id="IPR036291">
    <property type="entry name" value="NAD(P)-bd_dom_sf"/>
</dbReference>
<dbReference type="InterPro" id="IPR020843">
    <property type="entry name" value="PKS_ER"/>
</dbReference>
<dbReference type="InterPro" id="IPR047122">
    <property type="entry name" value="Trans-enoyl_RdTase-like"/>
</dbReference>
<dbReference type="PANTHER" id="PTHR45348">
    <property type="entry name" value="HYPOTHETICAL OXIDOREDUCTASE (EUROFUNG)"/>
    <property type="match status" value="1"/>
</dbReference>
<dbReference type="PANTHER" id="PTHR45348:SF1">
    <property type="entry name" value="TRANS-ENOYL REDUCTASE STHE"/>
    <property type="match status" value="1"/>
</dbReference>
<dbReference type="Pfam" id="PF08240">
    <property type="entry name" value="ADH_N"/>
    <property type="match status" value="1"/>
</dbReference>
<dbReference type="SMART" id="SM00829">
    <property type="entry name" value="PKS_ER"/>
    <property type="match status" value="1"/>
</dbReference>
<dbReference type="SUPFAM" id="SSF50129">
    <property type="entry name" value="GroES-like"/>
    <property type="match status" value="1"/>
</dbReference>
<dbReference type="SUPFAM" id="SSF51735">
    <property type="entry name" value="NAD(P)-binding Rossmann-fold domains"/>
    <property type="match status" value="1"/>
</dbReference>
<name>PHME_PHANO</name>
<reference key="1">
    <citation type="journal article" date="2007" name="Plant Cell">
        <title>Dothideomycete-plant interactions illuminated by genome sequencing and EST analysis of the wheat pathogen Stagonospora nodorum.</title>
        <authorList>
            <person name="Hane J.K."/>
            <person name="Lowe R.G.T."/>
            <person name="Solomon P.S."/>
            <person name="Tan K.-C."/>
            <person name="Schoch C.L."/>
            <person name="Spatafora J.W."/>
            <person name="Crous P.W."/>
            <person name="Kodira C.D."/>
            <person name="Birren B.W."/>
            <person name="Galagan J.E."/>
            <person name="Torriani S.F.F."/>
            <person name="McDonald B.A."/>
            <person name="Oliver R.P."/>
        </authorList>
    </citation>
    <scope>NUCLEOTIDE SEQUENCE [LARGE SCALE GENOMIC DNA]</scope>
    <source>
        <strain>SN15 / ATCC MYA-4574 / FGSC 10173</strain>
    </source>
</reference>
<reference key="2">
    <citation type="journal article" date="2020" name="ACS Chem. Biol.">
        <title>Genomics-driven discovery of phytotoxic cytochalasans involved in the virulence of the wheat pathogen Parastagonospora nodorum.</title>
        <authorList>
            <person name="Li H."/>
            <person name="Wei H."/>
            <person name="Hu J."/>
            <person name="Lacey E."/>
            <person name="Sobolev A.N."/>
            <person name="Stubbs K.A."/>
            <person name="Solomon P.S."/>
            <person name="Chooi Y.H."/>
        </authorList>
    </citation>
    <scope>FUNCTION</scope>
    <scope>PATHWAY</scope>
</reference>
<keyword id="KW-0521">NADP</keyword>
<keyword id="KW-0547">Nucleotide-binding</keyword>
<keyword id="KW-0560">Oxidoreductase</keyword>
<keyword id="KW-0843">Virulence</keyword>
<feature type="chain" id="PRO_0000449431" description="Trans-enoyl reductase phmE">
    <location>
        <begin position="1"/>
        <end position="349"/>
    </location>
</feature>
<feature type="binding site" evidence="1">
    <location>
        <begin position="55"/>
        <end position="58"/>
    </location>
    <ligand>
        <name>NADP(+)</name>
        <dbReference type="ChEBI" id="CHEBI:58349"/>
    </ligand>
</feature>
<feature type="binding site" evidence="2">
    <location>
        <begin position="143"/>
        <end position="150"/>
    </location>
    <ligand>
        <name>substrate</name>
    </ligand>
</feature>
<feature type="binding site" evidence="1">
    <location>
        <begin position="182"/>
        <end position="185"/>
    </location>
    <ligand>
        <name>NADP(+)</name>
        <dbReference type="ChEBI" id="CHEBI:58349"/>
    </ligand>
</feature>
<feature type="binding site" evidence="1">
    <location>
        <position position="200"/>
    </location>
    <ligand>
        <name>NADP(+)</name>
        <dbReference type="ChEBI" id="CHEBI:58349"/>
    </ligand>
</feature>
<feature type="binding site" evidence="1">
    <location>
        <begin position="247"/>
        <end position="248"/>
    </location>
    <ligand>
        <name>NADP(+)</name>
        <dbReference type="ChEBI" id="CHEBI:58349"/>
    </ligand>
</feature>
<feature type="binding site" evidence="2">
    <location>
        <begin position="267"/>
        <end position="271"/>
    </location>
    <ligand>
        <name>substrate</name>
    </ligand>
</feature>
<feature type="binding site" evidence="1">
    <location>
        <begin position="336"/>
        <end position="337"/>
    </location>
    <ligand>
        <name>NADP(+)</name>
        <dbReference type="ChEBI" id="CHEBI:58349"/>
    </ligand>
</feature>
<proteinExistence type="inferred from homology"/>
<sequence>MSRVRYNNSVALPATQTVIKQNEDGLLTIQKDFPLPEIRSDRLLVRVEYVAINPCDWKMSERFPAPGAVDGCDFAGTVVALGSDVSKTGRFQVGEKVCGGVHGSNPIDPTTGSFAEYLSADAEFTFKVPGYMGLKEAAAVGGTGIGTMGLALSKSLGLPGSPTRPVGETDSKYVLVPIAVCSPKNYDLVKSYGAVKAFDYHSPTCAQDIRAYTKNRLAHIIDPIVEAKTMQLCYAAMGRAGGKYCALEAYADELCTRKVVKPELVMGMAILGRKVALNHGYGSEADAGKRAFGIEWYREMQDLLDAGRLMTHPVRVVPGRFDGIMKGLQMLKTKQVSGEKLIVQLGSNN</sequence>
<protein>
    <recommendedName>
        <fullName evidence="4">Trans-enoyl reductase phmE</fullName>
        <ecNumber evidence="6">1.-.-.-</ecNumber>
    </recommendedName>
    <alternativeName>
        <fullName evidence="4">Phomacin biosynthesis cluster protein E</fullName>
    </alternativeName>
</protein>
<organism>
    <name type="scientific">Phaeosphaeria nodorum (strain SN15 / ATCC MYA-4574 / FGSC 10173)</name>
    <name type="common">Glume blotch fungus</name>
    <name type="synonym">Parastagonospora nodorum</name>
    <dbReference type="NCBI Taxonomy" id="321614"/>
    <lineage>
        <taxon>Eukaryota</taxon>
        <taxon>Fungi</taxon>
        <taxon>Dikarya</taxon>
        <taxon>Ascomycota</taxon>
        <taxon>Pezizomycotina</taxon>
        <taxon>Dothideomycetes</taxon>
        <taxon>Pleosporomycetidae</taxon>
        <taxon>Pleosporales</taxon>
        <taxon>Pleosporineae</taxon>
        <taxon>Phaeosphaeriaceae</taxon>
        <taxon>Parastagonospora</taxon>
    </lineage>
</organism>
<evidence type="ECO:0000250" key="1">
    <source>
        <dbReference type="UniProtKB" id="Q9Y7D0"/>
    </source>
</evidence>
<evidence type="ECO:0000255" key="2"/>
<evidence type="ECO:0000269" key="3">
    <source>
    </source>
</evidence>
<evidence type="ECO:0000303" key="4">
    <source>
    </source>
</evidence>
<evidence type="ECO:0000305" key="5"/>
<evidence type="ECO:0000305" key="6">
    <source>
    </source>
</evidence>
<gene>
    <name evidence="4" type="primary">phmE</name>
    <name type="ORF">SNOG_00311</name>
</gene>
<comment type="function">
    <text evidence="3 6">Trans-enoyl reductase; part of the gene cluster that mediates the biosynthesis of the mycotoxins phomacins, leucine-derived cytochalasans with potent actin polymerization-inhibitory activities and monocot-specific antigerminative activities (PubMed:31815421). The first step in the pathway is catalyzed by the hybrid PKS-NRPS phmA, assisted by the enoyl reductase phmE, that are responsible for fusion of the leucine precursor and the polyketide backbone to produce a 2-pyrrolidone intermediate (PubMed:31815421). The polyketide synthase module (PKS) of phmA is responsible for the synthesis of the polyketide backbone and the downstream nonribosomal peptide synthetase (NRPS) amidates the carboxyl end of the polyketide with the leucine precursor (PubMed:31815421). Because phmA lacks a designated enoylreductase (ER) domain, the required activity is provided the enoyl reductase phmE (PubMed:31815421). Reduction by the hydrolyase phmG, followed by dehydration and intra-molecular Diels-Alder cyclization by the Diels-Alderase phmD then yield the required isoindolone-fused macrocycle (Probable). A number of oxidative steps catalyzed by the tailoring cytochrome P450 monooxygenase phmB, the FAD-linked oxidoreductase phmC and the short-chain dehydrogenase/reductase phmF, are further required to afford the final products, phomacin D and phomacin E (PubMed:31815421).</text>
</comment>
<comment type="pathway">
    <text evidence="3">Mycotoxin biosynthesis.</text>
</comment>
<comment type="subunit">
    <text evidence="1">Monomer.</text>
</comment>
<comment type="similarity">
    <text evidence="5">Belongs to the zinc-containing alcohol dehydrogenase family.</text>
</comment>